<accession>Q8KAK6</accession>
<protein>
    <recommendedName>
        <fullName evidence="1">Adenylosuccinate synthetase</fullName>
        <shortName evidence="1">AMPSase</shortName>
        <shortName evidence="1">AdSS</shortName>
        <ecNumber evidence="1">6.3.4.4</ecNumber>
    </recommendedName>
    <alternativeName>
        <fullName evidence="1">IMP--aspartate ligase</fullName>
    </alternativeName>
</protein>
<feature type="chain" id="PRO_0000095164" description="Adenylosuccinate synthetase">
    <location>
        <begin position="1"/>
        <end position="435"/>
    </location>
</feature>
<feature type="active site" description="Proton acceptor" evidence="1">
    <location>
        <position position="23"/>
    </location>
</feature>
<feature type="active site" description="Proton donor" evidence="1">
    <location>
        <position position="51"/>
    </location>
</feature>
<feature type="binding site" evidence="1">
    <location>
        <begin position="22"/>
        <end position="28"/>
    </location>
    <ligand>
        <name>GTP</name>
        <dbReference type="ChEBI" id="CHEBI:37565"/>
    </ligand>
</feature>
<feature type="binding site" description="in other chain" evidence="1">
    <location>
        <begin position="23"/>
        <end position="26"/>
    </location>
    <ligand>
        <name>IMP</name>
        <dbReference type="ChEBI" id="CHEBI:58053"/>
        <note>ligand shared between dimeric partners</note>
    </ligand>
</feature>
<feature type="binding site" evidence="1">
    <location>
        <position position="23"/>
    </location>
    <ligand>
        <name>Mg(2+)</name>
        <dbReference type="ChEBI" id="CHEBI:18420"/>
    </ligand>
</feature>
<feature type="binding site" description="in other chain" evidence="1">
    <location>
        <begin position="48"/>
        <end position="51"/>
    </location>
    <ligand>
        <name>IMP</name>
        <dbReference type="ChEBI" id="CHEBI:58053"/>
        <note>ligand shared between dimeric partners</note>
    </ligand>
</feature>
<feature type="binding site" evidence="1">
    <location>
        <begin position="50"/>
        <end position="52"/>
    </location>
    <ligand>
        <name>GTP</name>
        <dbReference type="ChEBI" id="CHEBI:37565"/>
    </ligand>
</feature>
<feature type="binding site" evidence="1">
    <location>
        <position position="50"/>
    </location>
    <ligand>
        <name>Mg(2+)</name>
        <dbReference type="ChEBI" id="CHEBI:18420"/>
    </ligand>
</feature>
<feature type="binding site" description="in other chain" evidence="1">
    <location>
        <position position="140"/>
    </location>
    <ligand>
        <name>IMP</name>
        <dbReference type="ChEBI" id="CHEBI:58053"/>
        <note>ligand shared between dimeric partners</note>
    </ligand>
</feature>
<feature type="binding site" evidence="1">
    <location>
        <position position="154"/>
    </location>
    <ligand>
        <name>IMP</name>
        <dbReference type="ChEBI" id="CHEBI:58053"/>
        <note>ligand shared between dimeric partners</note>
    </ligand>
</feature>
<feature type="binding site" description="in other chain" evidence="1">
    <location>
        <position position="235"/>
    </location>
    <ligand>
        <name>IMP</name>
        <dbReference type="ChEBI" id="CHEBI:58053"/>
        <note>ligand shared between dimeric partners</note>
    </ligand>
</feature>
<feature type="binding site" description="in other chain" evidence="1">
    <location>
        <position position="250"/>
    </location>
    <ligand>
        <name>IMP</name>
        <dbReference type="ChEBI" id="CHEBI:58053"/>
        <note>ligand shared between dimeric partners</note>
    </ligand>
</feature>
<feature type="binding site" evidence="1">
    <location>
        <begin position="310"/>
        <end position="316"/>
    </location>
    <ligand>
        <name>substrate</name>
    </ligand>
</feature>
<feature type="binding site" description="in other chain" evidence="1">
    <location>
        <position position="314"/>
    </location>
    <ligand>
        <name>IMP</name>
        <dbReference type="ChEBI" id="CHEBI:58053"/>
        <note>ligand shared between dimeric partners</note>
    </ligand>
</feature>
<feature type="binding site" evidence="1">
    <location>
        <position position="316"/>
    </location>
    <ligand>
        <name>GTP</name>
        <dbReference type="ChEBI" id="CHEBI:37565"/>
    </ligand>
</feature>
<feature type="binding site" evidence="1">
    <location>
        <begin position="342"/>
        <end position="344"/>
    </location>
    <ligand>
        <name>GTP</name>
        <dbReference type="ChEBI" id="CHEBI:37565"/>
    </ligand>
</feature>
<feature type="binding site" evidence="1">
    <location>
        <begin position="424"/>
        <end position="426"/>
    </location>
    <ligand>
        <name>GTP</name>
        <dbReference type="ChEBI" id="CHEBI:37565"/>
    </ligand>
</feature>
<name>PURA_CHLTE</name>
<keyword id="KW-0963">Cytoplasm</keyword>
<keyword id="KW-0342">GTP-binding</keyword>
<keyword id="KW-0436">Ligase</keyword>
<keyword id="KW-0460">Magnesium</keyword>
<keyword id="KW-0479">Metal-binding</keyword>
<keyword id="KW-0547">Nucleotide-binding</keyword>
<keyword id="KW-0658">Purine biosynthesis</keyword>
<keyword id="KW-1185">Reference proteome</keyword>
<sequence length="435" mass="47773">MEEKIFSRPAASATVLVGTQFGDEGKGKLVDYLSDKYDIVVRYQGGANAGHTICFDGKTVVLHLIPSGIFNKDCICVIGNGVVIDPNALMDEIKKVEELGYDVKGRLYISHNAHLIMPYHKRLDSLSESCLSGDNKIGTTGRGIGPSYEDKFARKGIRVVDLLDRDVLKEKLRENLAAKNKLISKVYEQEEIDVEAIIREYEEFDKAIDPYVTNTQLFLNRQIKAGKTILLEGAQGCLLDVDHGTYPFVTSSNPTSGGACTGSGVAPNHVGKIIGVCKAYTTRVGNGDFPTELDDETGEALGRIGCEFGATTGRKRRCGWLDLVALRYSVTVSGVTELALTKLDVLDTFEEIKVCTSYMLDGKEIFDFPTEHQTLSRVQPVYKSLKGWMASNAKAKSFAEMHPNAQAYVNFLEEALEVPVTFISVGPGRDETVFK</sequence>
<proteinExistence type="inferred from homology"/>
<comment type="function">
    <text evidence="1">Plays an important role in the de novo pathway of purine nucleotide biosynthesis. Catalyzes the first committed step in the biosynthesis of AMP from IMP.</text>
</comment>
<comment type="catalytic activity">
    <reaction evidence="1">
        <text>IMP + L-aspartate + GTP = N(6)-(1,2-dicarboxyethyl)-AMP + GDP + phosphate + 2 H(+)</text>
        <dbReference type="Rhea" id="RHEA:15753"/>
        <dbReference type="ChEBI" id="CHEBI:15378"/>
        <dbReference type="ChEBI" id="CHEBI:29991"/>
        <dbReference type="ChEBI" id="CHEBI:37565"/>
        <dbReference type="ChEBI" id="CHEBI:43474"/>
        <dbReference type="ChEBI" id="CHEBI:57567"/>
        <dbReference type="ChEBI" id="CHEBI:58053"/>
        <dbReference type="ChEBI" id="CHEBI:58189"/>
        <dbReference type="EC" id="6.3.4.4"/>
    </reaction>
</comment>
<comment type="cofactor">
    <cofactor evidence="1">
        <name>Mg(2+)</name>
        <dbReference type="ChEBI" id="CHEBI:18420"/>
    </cofactor>
    <text evidence="1">Binds 1 Mg(2+) ion per subunit.</text>
</comment>
<comment type="pathway">
    <text evidence="1">Purine metabolism; AMP biosynthesis via de novo pathway; AMP from IMP: step 1/2.</text>
</comment>
<comment type="subunit">
    <text evidence="1">Homodimer.</text>
</comment>
<comment type="subcellular location">
    <subcellularLocation>
        <location evidence="1">Cytoplasm</location>
    </subcellularLocation>
</comment>
<comment type="similarity">
    <text evidence="1">Belongs to the adenylosuccinate synthetase family.</text>
</comment>
<gene>
    <name evidence="1" type="primary">purA</name>
    <name type="ordered locus">CT2154</name>
</gene>
<evidence type="ECO:0000255" key="1">
    <source>
        <dbReference type="HAMAP-Rule" id="MF_00011"/>
    </source>
</evidence>
<organism>
    <name type="scientific">Chlorobaculum tepidum (strain ATCC 49652 / DSM 12025 / NBRC 103806 / TLS)</name>
    <name type="common">Chlorobium tepidum</name>
    <dbReference type="NCBI Taxonomy" id="194439"/>
    <lineage>
        <taxon>Bacteria</taxon>
        <taxon>Pseudomonadati</taxon>
        <taxon>Chlorobiota</taxon>
        <taxon>Chlorobiia</taxon>
        <taxon>Chlorobiales</taxon>
        <taxon>Chlorobiaceae</taxon>
        <taxon>Chlorobaculum</taxon>
    </lineage>
</organism>
<reference key="1">
    <citation type="journal article" date="2002" name="Proc. Natl. Acad. Sci. U.S.A.">
        <title>The complete genome sequence of Chlorobium tepidum TLS, a photosynthetic, anaerobic, green-sulfur bacterium.</title>
        <authorList>
            <person name="Eisen J.A."/>
            <person name="Nelson K.E."/>
            <person name="Paulsen I.T."/>
            <person name="Heidelberg J.F."/>
            <person name="Wu M."/>
            <person name="Dodson R.J."/>
            <person name="DeBoy R.T."/>
            <person name="Gwinn M.L."/>
            <person name="Nelson W.C."/>
            <person name="Haft D.H."/>
            <person name="Hickey E.K."/>
            <person name="Peterson J.D."/>
            <person name="Durkin A.S."/>
            <person name="Kolonay J.F."/>
            <person name="Yang F."/>
            <person name="Holt I.E."/>
            <person name="Umayam L.A."/>
            <person name="Mason T.M."/>
            <person name="Brenner M."/>
            <person name="Shea T.P."/>
            <person name="Parksey D.S."/>
            <person name="Nierman W.C."/>
            <person name="Feldblyum T.V."/>
            <person name="Hansen C.L."/>
            <person name="Craven M.B."/>
            <person name="Radune D."/>
            <person name="Vamathevan J.J."/>
            <person name="Khouri H.M."/>
            <person name="White O."/>
            <person name="Gruber T.M."/>
            <person name="Ketchum K.A."/>
            <person name="Venter J.C."/>
            <person name="Tettelin H."/>
            <person name="Bryant D.A."/>
            <person name="Fraser C.M."/>
        </authorList>
    </citation>
    <scope>NUCLEOTIDE SEQUENCE [LARGE SCALE GENOMIC DNA]</scope>
    <source>
        <strain>ATCC 49652 / DSM 12025 / NBRC 103806 / TLS</strain>
    </source>
</reference>
<dbReference type="EC" id="6.3.4.4" evidence="1"/>
<dbReference type="EMBL" id="AE006470">
    <property type="protein sequence ID" value="AAM73370.1"/>
    <property type="molecule type" value="Genomic_DNA"/>
</dbReference>
<dbReference type="RefSeq" id="NP_663028.1">
    <property type="nucleotide sequence ID" value="NC_002932.3"/>
</dbReference>
<dbReference type="RefSeq" id="WP_010933807.1">
    <property type="nucleotide sequence ID" value="NC_002932.3"/>
</dbReference>
<dbReference type="SMR" id="Q8KAK6"/>
<dbReference type="STRING" id="194439.CT2154"/>
<dbReference type="EnsemblBacteria" id="AAM73370">
    <property type="protein sequence ID" value="AAM73370"/>
    <property type="gene ID" value="CT2154"/>
</dbReference>
<dbReference type="KEGG" id="cte:CT2154"/>
<dbReference type="PATRIC" id="fig|194439.7.peg.1954"/>
<dbReference type="eggNOG" id="COG0104">
    <property type="taxonomic scope" value="Bacteria"/>
</dbReference>
<dbReference type="HOGENOM" id="CLU_029848_0_0_10"/>
<dbReference type="OrthoDB" id="9807553at2"/>
<dbReference type="UniPathway" id="UPA00075">
    <property type="reaction ID" value="UER00335"/>
</dbReference>
<dbReference type="Proteomes" id="UP000001007">
    <property type="component" value="Chromosome"/>
</dbReference>
<dbReference type="GO" id="GO:0005737">
    <property type="term" value="C:cytoplasm"/>
    <property type="evidence" value="ECO:0007669"/>
    <property type="project" value="UniProtKB-SubCell"/>
</dbReference>
<dbReference type="GO" id="GO:0004019">
    <property type="term" value="F:adenylosuccinate synthase activity"/>
    <property type="evidence" value="ECO:0007669"/>
    <property type="project" value="UniProtKB-UniRule"/>
</dbReference>
<dbReference type="GO" id="GO:0005525">
    <property type="term" value="F:GTP binding"/>
    <property type="evidence" value="ECO:0007669"/>
    <property type="project" value="UniProtKB-UniRule"/>
</dbReference>
<dbReference type="GO" id="GO:0000287">
    <property type="term" value="F:magnesium ion binding"/>
    <property type="evidence" value="ECO:0007669"/>
    <property type="project" value="UniProtKB-UniRule"/>
</dbReference>
<dbReference type="GO" id="GO:0044208">
    <property type="term" value="P:'de novo' AMP biosynthetic process"/>
    <property type="evidence" value="ECO:0007669"/>
    <property type="project" value="UniProtKB-UniRule"/>
</dbReference>
<dbReference type="GO" id="GO:0046040">
    <property type="term" value="P:IMP metabolic process"/>
    <property type="evidence" value="ECO:0007669"/>
    <property type="project" value="TreeGrafter"/>
</dbReference>
<dbReference type="CDD" id="cd03108">
    <property type="entry name" value="AdSS"/>
    <property type="match status" value="1"/>
</dbReference>
<dbReference type="FunFam" id="1.10.300.10:FF:000001">
    <property type="entry name" value="Adenylosuccinate synthetase"/>
    <property type="match status" value="1"/>
</dbReference>
<dbReference type="FunFam" id="3.90.170.10:FF:000001">
    <property type="entry name" value="Adenylosuccinate synthetase"/>
    <property type="match status" value="1"/>
</dbReference>
<dbReference type="Gene3D" id="3.40.440.10">
    <property type="entry name" value="Adenylosuccinate Synthetase, subunit A, domain 1"/>
    <property type="match status" value="1"/>
</dbReference>
<dbReference type="Gene3D" id="1.10.300.10">
    <property type="entry name" value="Adenylosuccinate Synthetase, subunit A, domain 2"/>
    <property type="match status" value="1"/>
</dbReference>
<dbReference type="Gene3D" id="3.90.170.10">
    <property type="entry name" value="Adenylosuccinate Synthetase, subunit A, domain 3"/>
    <property type="match status" value="1"/>
</dbReference>
<dbReference type="HAMAP" id="MF_00011">
    <property type="entry name" value="Adenylosucc_synth"/>
    <property type="match status" value="1"/>
</dbReference>
<dbReference type="InterPro" id="IPR018220">
    <property type="entry name" value="Adenylosuccin_syn_GTP-bd"/>
</dbReference>
<dbReference type="InterPro" id="IPR033128">
    <property type="entry name" value="Adenylosuccin_syn_Lys_AS"/>
</dbReference>
<dbReference type="InterPro" id="IPR042109">
    <property type="entry name" value="Adenylosuccinate_synth_dom1"/>
</dbReference>
<dbReference type="InterPro" id="IPR042110">
    <property type="entry name" value="Adenylosuccinate_synth_dom2"/>
</dbReference>
<dbReference type="InterPro" id="IPR042111">
    <property type="entry name" value="Adenylosuccinate_synth_dom3"/>
</dbReference>
<dbReference type="InterPro" id="IPR001114">
    <property type="entry name" value="Adenylosuccinate_synthetase"/>
</dbReference>
<dbReference type="InterPro" id="IPR027417">
    <property type="entry name" value="P-loop_NTPase"/>
</dbReference>
<dbReference type="NCBIfam" id="NF002223">
    <property type="entry name" value="PRK01117.1"/>
    <property type="match status" value="1"/>
</dbReference>
<dbReference type="NCBIfam" id="TIGR00184">
    <property type="entry name" value="purA"/>
    <property type="match status" value="1"/>
</dbReference>
<dbReference type="PANTHER" id="PTHR11846">
    <property type="entry name" value="ADENYLOSUCCINATE SYNTHETASE"/>
    <property type="match status" value="1"/>
</dbReference>
<dbReference type="PANTHER" id="PTHR11846:SF0">
    <property type="entry name" value="ADENYLOSUCCINATE SYNTHETASE"/>
    <property type="match status" value="1"/>
</dbReference>
<dbReference type="Pfam" id="PF00709">
    <property type="entry name" value="Adenylsucc_synt"/>
    <property type="match status" value="1"/>
</dbReference>
<dbReference type="SMART" id="SM00788">
    <property type="entry name" value="Adenylsucc_synt"/>
    <property type="match status" value="1"/>
</dbReference>
<dbReference type="SUPFAM" id="SSF52540">
    <property type="entry name" value="P-loop containing nucleoside triphosphate hydrolases"/>
    <property type="match status" value="1"/>
</dbReference>
<dbReference type="PROSITE" id="PS01266">
    <property type="entry name" value="ADENYLOSUCCIN_SYN_1"/>
    <property type="match status" value="1"/>
</dbReference>
<dbReference type="PROSITE" id="PS00513">
    <property type="entry name" value="ADENYLOSUCCIN_SYN_2"/>
    <property type="match status" value="1"/>
</dbReference>